<comment type="function">
    <text evidence="1">One of the early assembly proteins it binds 23S rRNA. One of the proteins that surrounds the polypeptide exit tunnel on the outside of the ribosome. Forms the main docking site for trigger factor binding to the ribosome.</text>
</comment>
<comment type="subunit">
    <text evidence="1">Part of the 50S ribosomal subunit. Contacts protein L29, and trigger factor when it is bound to the ribosome.</text>
</comment>
<comment type="similarity">
    <text evidence="1">Belongs to the universal ribosomal protein uL23 family.</text>
</comment>
<accession>Q17ZD6</accession>
<gene>
    <name evidence="1" type="primary">rplW</name>
    <name type="ordered locus">Hac_0138</name>
</gene>
<organism>
    <name type="scientific">Helicobacter acinonychis (strain Sheeba)</name>
    <dbReference type="NCBI Taxonomy" id="382638"/>
    <lineage>
        <taxon>Bacteria</taxon>
        <taxon>Pseudomonadati</taxon>
        <taxon>Campylobacterota</taxon>
        <taxon>Epsilonproteobacteria</taxon>
        <taxon>Campylobacterales</taxon>
        <taxon>Helicobacteraceae</taxon>
        <taxon>Helicobacter</taxon>
    </lineage>
</organism>
<evidence type="ECO:0000255" key="1">
    <source>
        <dbReference type="HAMAP-Rule" id="MF_01369"/>
    </source>
</evidence>
<evidence type="ECO:0000305" key="2"/>
<proteinExistence type="inferred from homology"/>
<feature type="chain" id="PRO_1000144571" description="Large ribosomal subunit protein uL23">
    <location>
        <begin position="1"/>
        <end position="93"/>
    </location>
</feature>
<dbReference type="EMBL" id="AM260522">
    <property type="protein sequence ID" value="CAJ98990.1"/>
    <property type="molecule type" value="Genomic_DNA"/>
</dbReference>
<dbReference type="RefSeq" id="WP_011577110.1">
    <property type="nucleotide sequence ID" value="NC_008229.1"/>
</dbReference>
<dbReference type="SMR" id="Q17ZD6"/>
<dbReference type="STRING" id="382638.Hac_0138"/>
<dbReference type="GeneID" id="31757667"/>
<dbReference type="KEGG" id="hac:Hac_0138"/>
<dbReference type="eggNOG" id="COG0089">
    <property type="taxonomic scope" value="Bacteria"/>
</dbReference>
<dbReference type="HOGENOM" id="CLU_037562_3_1_7"/>
<dbReference type="OrthoDB" id="5339807at2"/>
<dbReference type="BioCyc" id="HACI382638:HAC_RS00590-MONOMER"/>
<dbReference type="Proteomes" id="UP000000775">
    <property type="component" value="Chromosome"/>
</dbReference>
<dbReference type="GO" id="GO:1990904">
    <property type="term" value="C:ribonucleoprotein complex"/>
    <property type="evidence" value="ECO:0007669"/>
    <property type="project" value="UniProtKB-KW"/>
</dbReference>
<dbReference type="GO" id="GO:0005840">
    <property type="term" value="C:ribosome"/>
    <property type="evidence" value="ECO:0007669"/>
    <property type="project" value="UniProtKB-KW"/>
</dbReference>
<dbReference type="GO" id="GO:0019843">
    <property type="term" value="F:rRNA binding"/>
    <property type="evidence" value="ECO:0007669"/>
    <property type="project" value="UniProtKB-UniRule"/>
</dbReference>
<dbReference type="GO" id="GO:0003735">
    <property type="term" value="F:structural constituent of ribosome"/>
    <property type="evidence" value="ECO:0007669"/>
    <property type="project" value="InterPro"/>
</dbReference>
<dbReference type="GO" id="GO:0006412">
    <property type="term" value="P:translation"/>
    <property type="evidence" value="ECO:0007669"/>
    <property type="project" value="UniProtKB-UniRule"/>
</dbReference>
<dbReference type="Gene3D" id="3.30.70.330">
    <property type="match status" value="1"/>
</dbReference>
<dbReference type="HAMAP" id="MF_01369_B">
    <property type="entry name" value="Ribosomal_uL23_B"/>
    <property type="match status" value="1"/>
</dbReference>
<dbReference type="InterPro" id="IPR012677">
    <property type="entry name" value="Nucleotide-bd_a/b_plait_sf"/>
</dbReference>
<dbReference type="InterPro" id="IPR013025">
    <property type="entry name" value="Ribosomal_uL23-like"/>
</dbReference>
<dbReference type="InterPro" id="IPR012678">
    <property type="entry name" value="Ribosomal_uL23/eL15/eS24_sf"/>
</dbReference>
<dbReference type="NCBIfam" id="NF004362">
    <property type="entry name" value="PRK05738.2-2"/>
    <property type="match status" value="1"/>
</dbReference>
<dbReference type="Pfam" id="PF00276">
    <property type="entry name" value="Ribosomal_L23"/>
    <property type="match status" value="1"/>
</dbReference>
<dbReference type="SUPFAM" id="SSF54189">
    <property type="entry name" value="Ribosomal proteins S24e, L23 and L15e"/>
    <property type="match status" value="1"/>
</dbReference>
<protein>
    <recommendedName>
        <fullName evidence="1">Large ribosomal subunit protein uL23</fullName>
    </recommendedName>
    <alternativeName>
        <fullName evidence="2">50S ribosomal protein L23</fullName>
    </alternativeName>
</protein>
<reference key="1">
    <citation type="journal article" date="2006" name="PLoS Genet.">
        <title>Who ate whom? Adaptive Helicobacter genomic changes that accompanied a host jump from early humans to large felines.</title>
        <authorList>
            <person name="Eppinger M."/>
            <person name="Baar C."/>
            <person name="Linz B."/>
            <person name="Raddatz G."/>
            <person name="Lanz C."/>
            <person name="Keller H."/>
            <person name="Morelli G."/>
            <person name="Gressmann H."/>
            <person name="Achtman M."/>
            <person name="Schuster S.C."/>
        </authorList>
    </citation>
    <scope>NUCLEOTIDE SEQUENCE [LARGE SCALE GENOMIC DNA]</scope>
    <source>
        <strain>Sheeba</strain>
    </source>
</reference>
<name>RL23_HELAH</name>
<keyword id="KW-0687">Ribonucleoprotein</keyword>
<keyword id="KW-0689">Ribosomal protein</keyword>
<keyword id="KW-0694">RNA-binding</keyword>
<keyword id="KW-0699">rRNA-binding</keyword>
<sequence length="93" mass="10514">MADIMDIKSILYTEKSLGLQEKGVLVVQTAQNMTKNQLKEVFKTYFGFEPLKINSLKQEGKVKRFRGKLGQRKSFKKFYVKVPEGASIVALGA</sequence>